<sequence>MASPSRQPPLGGSGLLHGSRARSYGSLVQSSCSPVRERRLEHQLEPGDTLAGLALKYGVTMEQIKRTNRLYTNDSIFLKKTLYIPILSEPRDLFNGLDSEEENDGEEEVRPSKDEIGSSSGRRKNRGSGSGRPNGTGLPPHQETSTPSHDLSASDFLKKLDSQISLSKKAAAQKLRKGESGVPEEDTGLYPSSPRMQQRAVLGPVPLTRTSRTQTLRDQEDEIFKL</sequence>
<accession>Q9D0E3</accession>
<evidence type="ECO:0000250" key="1">
    <source>
        <dbReference type="UniProtKB" id="Q5HZA4"/>
    </source>
</evidence>
<evidence type="ECO:0000250" key="2">
    <source>
        <dbReference type="UniProtKB" id="Q96S90"/>
    </source>
</evidence>
<evidence type="ECO:0000255" key="3">
    <source>
        <dbReference type="PROSITE-ProRule" id="PRU01118"/>
    </source>
</evidence>
<evidence type="ECO:0000256" key="4">
    <source>
        <dbReference type="SAM" id="MobiDB-lite"/>
    </source>
</evidence>
<evidence type="ECO:0007744" key="5">
    <source>
    </source>
</evidence>
<name>LYSM1_MOUSE</name>
<keyword id="KW-0597">Phosphoprotein</keyword>
<keyword id="KW-1185">Reference proteome</keyword>
<gene>
    <name type="primary">Lysmd1</name>
</gene>
<reference key="1">
    <citation type="journal article" date="2005" name="Science">
        <title>The transcriptional landscape of the mammalian genome.</title>
        <authorList>
            <person name="Carninci P."/>
            <person name="Kasukawa T."/>
            <person name="Katayama S."/>
            <person name="Gough J."/>
            <person name="Frith M.C."/>
            <person name="Maeda N."/>
            <person name="Oyama R."/>
            <person name="Ravasi T."/>
            <person name="Lenhard B."/>
            <person name="Wells C."/>
            <person name="Kodzius R."/>
            <person name="Shimokawa K."/>
            <person name="Bajic V.B."/>
            <person name="Brenner S.E."/>
            <person name="Batalov S."/>
            <person name="Forrest A.R."/>
            <person name="Zavolan M."/>
            <person name="Davis M.J."/>
            <person name="Wilming L.G."/>
            <person name="Aidinis V."/>
            <person name="Allen J.E."/>
            <person name="Ambesi-Impiombato A."/>
            <person name="Apweiler R."/>
            <person name="Aturaliya R.N."/>
            <person name="Bailey T.L."/>
            <person name="Bansal M."/>
            <person name="Baxter L."/>
            <person name="Beisel K.W."/>
            <person name="Bersano T."/>
            <person name="Bono H."/>
            <person name="Chalk A.M."/>
            <person name="Chiu K.P."/>
            <person name="Choudhary V."/>
            <person name="Christoffels A."/>
            <person name="Clutterbuck D.R."/>
            <person name="Crowe M.L."/>
            <person name="Dalla E."/>
            <person name="Dalrymple B.P."/>
            <person name="de Bono B."/>
            <person name="Della Gatta G."/>
            <person name="di Bernardo D."/>
            <person name="Down T."/>
            <person name="Engstrom P."/>
            <person name="Fagiolini M."/>
            <person name="Faulkner G."/>
            <person name="Fletcher C.F."/>
            <person name="Fukushima T."/>
            <person name="Furuno M."/>
            <person name="Futaki S."/>
            <person name="Gariboldi M."/>
            <person name="Georgii-Hemming P."/>
            <person name="Gingeras T.R."/>
            <person name="Gojobori T."/>
            <person name="Green R.E."/>
            <person name="Gustincich S."/>
            <person name="Harbers M."/>
            <person name="Hayashi Y."/>
            <person name="Hensch T.K."/>
            <person name="Hirokawa N."/>
            <person name="Hill D."/>
            <person name="Huminiecki L."/>
            <person name="Iacono M."/>
            <person name="Ikeo K."/>
            <person name="Iwama A."/>
            <person name="Ishikawa T."/>
            <person name="Jakt M."/>
            <person name="Kanapin A."/>
            <person name="Katoh M."/>
            <person name="Kawasawa Y."/>
            <person name="Kelso J."/>
            <person name="Kitamura H."/>
            <person name="Kitano H."/>
            <person name="Kollias G."/>
            <person name="Krishnan S.P."/>
            <person name="Kruger A."/>
            <person name="Kummerfeld S.K."/>
            <person name="Kurochkin I.V."/>
            <person name="Lareau L.F."/>
            <person name="Lazarevic D."/>
            <person name="Lipovich L."/>
            <person name="Liu J."/>
            <person name="Liuni S."/>
            <person name="McWilliam S."/>
            <person name="Madan Babu M."/>
            <person name="Madera M."/>
            <person name="Marchionni L."/>
            <person name="Matsuda H."/>
            <person name="Matsuzawa S."/>
            <person name="Miki H."/>
            <person name="Mignone F."/>
            <person name="Miyake S."/>
            <person name="Morris K."/>
            <person name="Mottagui-Tabar S."/>
            <person name="Mulder N."/>
            <person name="Nakano N."/>
            <person name="Nakauchi H."/>
            <person name="Ng P."/>
            <person name="Nilsson R."/>
            <person name="Nishiguchi S."/>
            <person name="Nishikawa S."/>
            <person name="Nori F."/>
            <person name="Ohara O."/>
            <person name="Okazaki Y."/>
            <person name="Orlando V."/>
            <person name="Pang K.C."/>
            <person name="Pavan W.J."/>
            <person name="Pavesi G."/>
            <person name="Pesole G."/>
            <person name="Petrovsky N."/>
            <person name="Piazza S."/>
            <person name="Reed J."/>
            <person name="Reid J.F."/>
            <person name="Ring B.Z."/>
            <person name="Ringwald M."/>
            <person name="Rost B."/>
            <person name="Ruan Y."/>
            <person name="Salzberg S.L."/>
            <person name="Sandelin A."/>
            <person name="Schneider C."/>
            <person name="Schoenbach C."/>
            <person name="Sekiguchi K."/>
            <person name="Semple C.A."/>
            <person name="Seno S."/>
            <person name="Sessa L."/>
            <person name="Sheng Y."/>
            <person name="Shibata Y."/>
            <person name="Shimada H."/>
            <person name="Shimada K."/>
            <person name="Silva D."/>
            <person name="Sinclair B."/>
            <person name="Sperling S."/>
            <person name="Stupka E."/>
            <person name="Sugiura K."/>
            <person name="Sultana R."/>
            <person name="Takenaka Y."/>
            <person name="Taki K."/>
            <person name="Tammoja K."/>
            <person name="Tan S.L."/>
            <person name="Tang S."/>
            <person name="Taylor M.S."/>
            <person name="Tegner J."/>
            <person name="Teichmann S.A."/>
            <person name="Ueda H.R."/>
            <person name="van Nimwegen E."/>
            <person name="Verardo R."/>
            <person name="Wei C.L."/>
            <person name="Yagi K."/>
            <person name="Yamanishi H."/>
            <person name="Zabarovsky E."/>
            <person name="Zhu S."/>
            <person name="Zimmer A."/>
            <person name="Hide W."/>
            <person name="Bult C."/>
            <person name="Grimmond S.M."/>
            <person name="Teasdale R.D."/>
            <person name="Liu E.T."/>
            <person name="Brusic V."/>
            <person name="Quackenbush J."/>
            <person name="Wahlestedt C."/>
            <person name="Mattick J.S."/>
            <person name="Hume D.A."/>
            <person name="Kai C."/>
            <person name="Sasaki D."/>
            <person name="Tomaru Y."/>
            <person name="Fukuda S."/>
            <person name="Kanamori-Katayama M."/>
            <person name="Suzuki M."/>
            <person name="Aoki J."/>
            <person name="Arakawa T."/>
            <person name="Iida J."/>
            <person name="Imamura K."/>
            <person name="Itoh M."/>
            <person name="Kato T."/>
            <person name="Kawaji H."/>
            <person name="Kawagashira N."/>
            <person name="Kawashima T."/>
            <person name="Kojima M."/>
            <person name="Kondo S."/>
            <person name="Konno H."/>
            <person name="Nakano K."/>
            <person name="Ninomiya N."/>
            <person name="Nishio T."/>
            <person name="Okada M."/>
            <person name="Plessy C."/>
            <person name="Shibata K."/>
            <person name="Shiraki T."/>
            <person name="Suzuki S."/>
            <person name="Tagami M."/>
            <person name="Waki K."/>
            <person name="Watahiki A."/>
            <person name="Okamura-Oho Y."/>
            <person name="Suzuki H."/>
            <person name="Kawai J."/>
            <person name="Hayashizaki Y."/>
        </authorList>
    </citation>
    <scope>NUCLEOTIDE SEQUENCE [LARGE SCALE MRNA]</scope>
    <source>
        <strain>C57BL/6J</strain>
        <strain>NOD</strain>
        <tissue>Dendritic cell</tissue>
        <tissue>Embryo</tissue>
        <tissue>Ovary</tissue>
    </source>
</reference>
<reference key="2">
    <citation type="journal article" date="2004" name="Genome Res.">
        <title>The status, quality, and expansion of the NIH full-length cDNA project: the Mammalian Gene Collection (MGC).</title>
        <authorList>
            <consortium name="The MGC Project Team"/>
        </authorList>
    </citation>
    <scope>NUCLEOTIDE SEQUENCE [LARGE SCALE MRNA]</scope>
    <source>
        <strain>C57BL/6J</strain>
        <tissue>Fetal brain</tissue>
        <tissue>Retina</tissue>
    </source>
</reference>
<reference key="3">
    <citation type="journal article" date="2010" name="Cell">
        <title>A tissue-specific atlas of mouse protein phosphorylation and expression.</title>
        <authorList>
            <person name="Huttlin E.L."/>
            <person name="Jedrychowski M.P."/>
            <person name="Elias J.E."/>
            <person name="Goswami T."/>
            <person name="Rad R."/>
            <person name="Beausoleil S.A."/>
            <person name="Villen J."/>
            <person name="Haas W."/>
            <person name="Sowa M.E."/>
            <person name="Gygi S.P."/>
        </authorList>
    </citation>
    <scope>PHOSPHORYLATION [LARGE SCALE ANALYSIS] AT SER-99 AND SER-193</scope>
    <scope>IDENTIFICATION BY MASS SPECTROMETRY [LARGE SCALE ANALYSIS]</scope>
    <source>
        <tissue>Brain</tissue>
        <tissue>Brown adipose tissue</tissue>
        <tissue>Heart</tissue>
        <tissue>Kidney</tissue>
        <tissue>Liver</tissue>
        <tissue>Lung</tissue>
        <tissue>Pancreas</tissue>
        <tissue>Spleen</tissue>
        <tissue>Testis</tissue>
    </source>
</reference>
<protein>
    <recommendedName>
        <fullName>LysM and putative peptidoglycan-binding domain-containing protein 1</fullName>
    </recommendedName>
</protein>
<feature type="chain" id="PRO_0000247998" description="LysM and putative peptidoglycan-binding domain-containing protein 1">
    <location>
        <begin position="1"/>
        <end position="226"/>
    </location>
</feature>
<feature type="domain" description="LysM" evidence="3">
    <location>
        <begin position="40"/>
        <end position="84"/>
    </location>
</feature>
<feature type="region of interest" description="Disordered" evidence="4">
    <location>
        <begin position="95"/>
        <end position="156"/>
    </location>
</feature>
<feature type="region of interest" description="Disordered" evidence="4">
    <location>
        <begin position="170"/>
        <end position="226"/>
    </location>
</feature>
<feature type="compositionally biased region" description="Acidic residues" evidence="4">
    <location>
        <begin position="98"/>
        <end position="107"/>
    </location>
</feature>
<feature type="compositionally biased region" description="Polar residues" evidence="4">
    <location>
        <begin position="142"/>
        <end position="151"/>
    </location>
</feature>
<feature type="compositionally biased region" description="Basic and acidic residues" evidence="4">
    <location>
        <begin position="215"/>
        <end position="226"/>
    </location>
</feature>
<feature type="modified residue" description="Phosphoserine" evidence="2">
    <location>
        <position position="23"/>
    </location>
</feature>
<feature type="modified residue" description="Phosphoserine" evidence="2">
    <location>
        <position position="33"/>
    </location>
</feature>
<feature type="modified residue" description="Phosphoserine" evidence="5">
    <location>
        <position position="99"/>
    </location>
</feature>
<feature type="modified residue" description="Phosphoserine" evidence="2">
    <location>
        <position position="165"/>
    </location>
</feature>
<feature type="modified residue" description="Phosphoserine" evidence="1">
    <location>
        <position position="180"/>
    </location>
</feature>
<feature type="modified residue" description="Phosphoserine" evidence="5">
    <location>
        <position position="193"/>
    </location>
</feature>
<feature type="modified residue" description="Phosphoserine" evidence="2">
    <location>
        <position position="211"/>
    </location>
</feature>
<proteinExistence type="evidence at protein level"/>
<organism>
    <name type="scientific">Mus musculus</name>
    <name type="common">Mouse</name>
    <dbReference type="NCBI Taxonomy" id="10090"/>
    <lineage>
        <taxon>Eukaryota</taxon>
        <taxon>Metazoa</taxon>
        <taxon>Chordata</taxon>
        <taxon>Craniata</taxon>
        <taxon>Vertebrata</taxon>
        <taxon>Euteleostomi</taxon>
        <taxon>Mammalia</taxon>
        <taxon>Eutheria</taxon>
        <taxon>Euarchontoglires</taxon>
        <taxon>Glires</taxon>
        <taxon>Rodentia</taxon>
        <taxon>Myomorpha</taxon>
        <taxon>Muroidea</taxon>
        <taxon>Muridae</taxon>
        <taxon>Murinae</taxon>
        <taxon>Mus</taxon>
        <taxon>Mus</taxon>
    </lineage>
</organism>
<dbReference type="EMBL" id="AK011517">
    <property type="protein sequence ID" value="BAB27671.1"/>
    <property type="molecule type" value="mRNA"/>
</dbReference>
<dbReference type="EMBL" id="AK054348">
    <property type="protein sequence ID" value="BAC35742.1"/>
    <property type="molecule type" value="mRNA"/>
</dbReference>
<dbReference type="EMBL" id="AK154180">
    <property type="protein sequence ID" value="BAE32423.1"/>
    <property type="molecule type" value="mRNA"/>
</dbReference>
<dbReference type="EMBL" id="BC024838">
    <property type="protein sequence ID" value="AAH24838.1"/>
    <property type="molecule type" value="mRNA"/>
</dbReference>
<dbReference type="EMBL" id="BC100548">
    <property type="protein sequence ID" value="AAI00549.1"/>
    <property type="molecule type" value="mRNA"/>
</dbReference>
<dbReference type="CCDS" id="CCDS17602.1"/>
<dbReference type="RefSeq" id="NP_694761.1">
    <property type="nucleotide sequence ID" value="NM_153121.2"/>
</dbReference>
<dbReference type="SMR" id="Q9D0E3"/>
<dbReference type="BioGRID" id="229961">
    <property type="interactions" value="3"/>
</dbReference>
<dbReference type="FunCoup" id="Q9D0E3">
    <property type="interactions" value="1845"/>
</dbReference>
<dbReference type="STRING" id="10090.ENSMUSP00000067811"/>
<dbReference type="iPTMnet" id="Q9D0E3"/>
<dbReference type="PhosphoSitePlus" id="Q9D0E3"/>
<dbReference type="jPOST" id="Q9D0E3"/>
<dbReference type="PaxDb" id="10090-ENSMUSP00000067811"/>
<dbReference type="ProteomicsDB" id="292133"/>
<dbReference type="Pumba" id="Q9D0E3"/>
<dbReference type="Antibodypedia" id="34054">
    <property type="antibodies" value="108 antibodies from 18 providers"/>
</dbReference>
<dbReference type="Ensembl" id="ENSMUST00000066386.6">
    <property type="protein sequence ID" value="ENSMUSP00000067811.6"/>
    <property type="gene ID" value="ENSMUSG00000053769.6"/>
</dbReference>
<dbReference type="GeneID" id="217779"/>
<dbReference type="KEGG" id="mmu:217779"/>
<dbReference type="UCSC" id="uc008qie.2">
    <property type="organism name" value="mouse"/>
</dbReference>
<dbReference type="AGR" id="MGI:1919409"/>
<dbReference type="CTD" id="388695"/>
<dbReference type="MGI" id="MGI:1919409">
    <property type="gene designation" value="Lysmd1"/>
</dbReference>
<dbReference type="VEuPathDB" id="HostDB:ENSMUSG00000053769"/>
<dbReference type="eggNOG" id="ENOG502RZER">
    <property type="taxonomic scope" value="Eukaryota"/>
</dbReference>
<dbReference type="GeneTree" id="ENSGT00940000160002"/>
<dbReference type="HOGENOM" id="CLU_079453_0_0_1"/>
<dbReference type="InParanoid" id="Q9D0E3"/>
<dbReference type="OMA" id="EVWPHSA"/>
<dbReference type="OrthoDB" id="2107166at2759"/>
<dbReference type="PhylomeDB" id="Q9D0E3"/>
<dbReference type="TreeFam" id="TF318444"/>
<dbReference type="BioGRID-ORCS" id="217779">
    <property type="hits" value="5 hits in 45 CRISPR screens"/>
</dbReference>
<dbReference type="CD-CODE" id="CE726F99">
    <property type="entry name" value="Postsynaptic density"/>
</dbReference>
<dbReference type="ChiTaRS" id="Lysmd1">
    <property type="organism name" value="mouse"/>
</dbReference>
<dbReference type="PRO" id="PR:Q9D0E3"/>
<dbReference type="Proteomes" id="UP000000589">
    <property type="component" value="Chromosome 3"/>
</dbReference>
<dbReference type="RNAct" id="Q9D0E3">
    <property type="molecule type" value="protein"/>
</dbReference>
<dbReference type="Bgee" id="ENSMUSG00000053769">
    <property type="expression patterns" value="Expressed in bone marrow and 62 other cell types or tissues"/>
</dbReference>
<dbReference type="ExpressionAtlas" id="Q9D0E3">
    <property type="expression patterns" value="baseline and differential"/>
</dbReference>
<dbReference type="GO" id="GO:0005654">
    <property type="term" value="C:nucleoplasm"/>
    <property type="evidence" value="ECO:0007669"/>
    <property type="project" value="Ensembl"/>
</dbReference>
<dbReference type="CDD" id="cd00118">
    <property type="entry name" value="LysM"/>
    <property type="match status" value="1"/>
</dbReference>
<dbReference type="FunFam" id="3.10.350.10:FF:000010">
    <property type="entry name" value="LysM and putative peptidoglycan-binding domain-containing protein 1"/>
    <property type="match status" value="1"/>
</dbReference>
<dbReference type="Gene3D" id="3.10.350.10">
    <property type="entry name" value="LysM domain"/>
    <property type="match status" value="1"/>
</dbReference>
<dbReference type="InterPro" id="IPR045030">
    <property type="entry name" value="LYSM1-4"/>
</dbReference>
<dbReference type="InterPro" id="IPR018392">
    <property type="entry name" value="LysM_dom"/>
</dbReference>
<dbReference type="InterPro" id="IPR036779">
    <property type="entry name" value="LysM_dom_sf"/>
</dbReference>
<dbReference type="PANTHER" id="PTHR20932:SF2">
    <property type="entry name" value="AND PUTATIVE PEPTIDOGLYCAN-BINDING DOMAIN-CONTAINING PROTEIN 1-RELATED"/>
    <property type="match status" value="1"/>
</dbReference>
<dbReference type="PANTHER" id="PTHR20932">
    <property type="entry name" value="LYSM AND PUTATIVE PEPTIDOGLYCAN-BINDING DOMAIN-CONTAINING PROTEIN"/>
    <property type="match status" value="1"/>
</dbReference>
<dbReference type="Pfam" id="PF01476">
    <property type="entry name" value="LysM"/>
    <property type="match status" value="1"/>
</dbReference>
<dbReference type="SMART" id="SM00257">
    <property type="entry name" value="LysM"/>
    <property type="match status" value="1"/>
</dbReference>
<dbReference type="SUPFAM" id="SSF54106">
    <property type="entry name" value="LysM domain"/>
    <property type="match status" value="1"/>
</dbReference>
<dbReference type="PROSITE" id="PS51782">
    <property type="entry name" value="LYSM"/>
    <property type="match status" value="1"/>
</dbReference>